<gene>
    <name type="ordered locus">BP3561</name>
</gene>
<feature type="signal peptide" evidence="1">
    <location>
        <begin position="1"/>
        <end position="19"/>
    </location>
</feature>
<feature type="chain" id="PRO_0000193444" description="Probable parvulin-type peptidyl-prolyl cis-trans isomerase">
    <location>
        <begin position="20"/>
        <end position="258"/>
    </location>
</feature>
<feature type="domain" description="PpiC" evidence="2">
    <location>
        <begin position="127"/>
        <end position="219"/>
    </location>
</feature>
<feature type="sequence conflict" description="In Ref. 2; CAB56780." evidence="3" ref="2">
    <original>PGSAE</original>
    <variation>GDPRQ</variation>
    <location>
        <begin position="168"/>
        <end position="172"/>
    </location>
</feature>
<comment type="catalytic activity">
    <reaction>
        <text>[protein]-peptidylproline (omega=180) = [protein]-peptidylproline (omega=0)</text>
        <dbReference type="Rhea" id="RHEA:16237"/>
        <dbReference type="Rhea" id="RHEA-COMP:10747"/>
        <dbReference type="Rhea" id="RHEA-COMP:10748"/>
        <dbReference type="ChEBI" id="CHEBI:83833"/>
        <dbReference type="ChEBI" id="CHEBI:83834"/>
        <dbReference type="EC" id="5.2.1.8"/>
    </reaction>
</comment>
<comment type="similarity">
    <text evidence="3">Belongs to the PpiC/parvulin rotamase family.</text>
</comment>
<comment type="caution">
    <text evidence="3">Was originally (Ref.2) thought to originate from Dictyostelium discoideum.</text>
</comment>
<evidence type="ECO:0000255" key="1"/>
<evidence type="ECO:0000255" key="2">
    <source>
        <dbReference type="PROSITE-ProRule" id="PRU00278"/>
    </source>
</evidence>
<evidence type="ECO:0000305" key="3"/>
<dbReference type="EC" id="5.2.1.8"/>
<dbReference type="EMBL" id="BX640421">
    <property type="protein sequence ID" value="CAE43820.1"/>
    <property type="molecule type" value="Genomic_DNA"/>
</dbReference>
<dbReference type="EMBL" id="X70280">
    <property type="protein sequence ID" value="CAB56780.1"/>
    <property type="molecule type" value="mRNA"/>
</dbReference>
<dbReference type="RefSeq" id="NP_882074.1">
    <property type="nucleotide sequence ID" value="NC_002929.2"/>
</dbReference>
<dbReference type="RefSeq" id="WP_003821314.1">
    <property type="nucleotide sequence ID" value="NZ_CP039022.1"/>
</dbReference>
<dbReference type="SMR" id="P40415"/>
<dbReference type="STRING" id="257313.BP3561"/>
<dbReference type="PaxDb" id="257313-BP3561"/>
<dbReference type="KEGG" id="bpe:BP3561"/>
<dbReference type="PATRIC" id="fig|257313.5.peg.3854"/>
<dbReference type="eggNOG" id="COG0760">
    <property type="taxonomic scope" value="Bacteria"/>
</dbReference>
<dbReference type="HOGENOM" id="CLU_034646_1_1_4"/>
<dbReference type="BRENDA" id="5.2.1.8">
    <property type="organism ID" value="899"/>
</dbReference>
<dbReference type="Proteomes" id="UP000002676">
    <property type="component" value="Chromosome"/>
</dbReference>
<dbReference type="GO" id="GO:0003755">
    <property type="term" value="F:peptidyl-prolyl cis-trans isomerase activity"/>
    <property type="evidence" value="ECO:0007669"/>
    <property type="project" value="UniProtKB-KW"/>
</dbReference>
<dbReference type="Gene3D" id="1.10.8.1040">
    <property type="match status" value="1"/>
</dbReference>
<dbReference type="Gene3D" id="3.10.50.40">
    <property type="match status" value="1"/>
</dbReference>
<dbReference type="InterPro" id="IPR046357">
    <property type="entry name" value="PPIase_dom_sf"/>
</dbReference>
<dbReference type="InterPro" id="IPR000297">
    <property type="entry name" value="PPIase_PpiC"/>
</dbReference>
<dbReference type="InterPro" id="IPR023058">
    <property type="entry name" value="PPIase_PpiC_CS"/>
</dbReference>
<dbReference type="InterPro" id="IPR050245">
    <property type="entry name" value="PrsA_foldase"/>
</dbReference>
<dbReference type="PANTHER" id="PTHR47245:SF1">
    <property type="entry name" value="FOLDASE PROTEIN PRSA"/>
    <property type="match status" value="1"/>
</dbReference>
<dbReference type="PANTHER" id="PTHR47245">
    <property type="entry name" value="PEPTIDYLPROLYL ISOMERASE"/>
    <property type="match status" value="1"/>
</dbReference>
<dbReference type="Pfam" id="PF13616">
    <property type="entry name" value="Rotamase_3"/>
    <property type="match status" value="1"/>
</dbReference>
<dbReference type="SUPFAM" id="SSF54534">
    <property type="entry name" value="FKBP-like"/>
    <property type="match status" value="1"/>
</dbReference>
<dbReference type="PROSITE" id="PS01096">
    <property type="entry name" value="PPIC_PPIASE_1"/>
    <property type="match status" value="1"/>
</dbReference>
<dbReference type="PROSITE" id="PS50198">
    <property type="entry name" value="PPIC_PPIASE_2"/>
    <property type="match status" value="1"/>
</dbReference>
<accession>P40415</accession>
<accession>Q7VTH9</accession>
<keyword id="KW-0413">Isomerase</keyword>
<keyword id="KW-1185">Reference proteome</keyword>
<keyword id="KW-0697">Rotamase</keyword>
<keyword id="KW-0732">Signal</keyword>
<name>PLP1_BORPE</name>
<proteinExistence type="evidence at transcript level"/>
<reference key="1">
    <citation type="journal article" date="2003" name="Nat. Genet.">
        <title>Comparative analysis of the genome sequences of Bordetella pertussis, Bordetella parapertussis and Bordetella bronchiseptica.</title>
        <authorList>
            <person name="Parkhill J."/>
            <person name="Sebaihia M."/>
            <person name="Preston A."/>
            <person name="Murphy L.D."/>
            <person name="Thomson N.R."/>
            <person name="Harris D.E."/>
            <person name="Holden M.T.G."/>
            <person name="Churcher C.M."/>
            <person name="Bentley S.D."/>
            <person name="Mungall K.L."/>
            <person name="Cerdeno-Tarraga A.-M."/>
            <person name="Temple L."/>
            <person name="James K.D."/>
            <person name="Harris B."/>
            <person name="Quail M.A."/>
            <person name="Achtman M."/>
            <person name="Atkin R."/>
            <person name="Baker S."/>
            <person name="Basham D."/>
            <person name="Bason N."/>
            <person name="Cherevach I."/>
            <person name="Chillingworth T."/>
            <person name="Collins M."/>
            <person name="Cronin A."/>
            <person name="Davis P."/>
            <person name="Doggett J."/>
            <person name="Feltwell T."/>
            <person name="Goble A."/>
            <person name="Hamlin N."/>
            <person name="Hauser H."/>
            <person name="Holroyd S."/>
            <person name="Jagels K."/>
            <person name="Leather S."/>
            <person name="Moule S."/>
            <person name="Norberczak H."/>
            <person name="O'Neil S."/>
            <person name="Ormond D."/>
            <person name="Price C."/>
            <person name="Rabbinowitsch E."/>
            <person name="Rutter S."/>
            <person name="Sanders M."/>
            <person name="Saunders D."/>
            <person name="Seeger K."/>
            <person name="Sharp S."/>
            <person name="Simmonds M."/>
            <person name="Skelton J."/>
            <person name="Squares R."/>
            <person name="Squares S."/>
            <person name="Stevens K."/>
            <person name="Unwin L."/>
            <person name="Whitehead S."/>
            <person name="Barrell B.G."/>
            <person name="Maskell D.J."/>
        </authorList>
    </citation>
    <scope>NUCLEOTIDE SEQUENCE [LARGE SCALE GENOMIC DNA]</scope>
    <source>
        <strain>Tohama I / ATCC BAA-589 / NCTC 13251</strain>
    </source>
</reference>
<reference key="2">
    <citation type="submission" date="1993-02" db="EMBL/GenBank/DDBJ databases">
        <title>Evidence for a virus encoded protein recognising rRNA gene upstream repeats in Dictyostelium discoideum.</title>
        <authorList>
            <person name="von Kaenel B."/>
            <person name="Chung S."/>
            <person name="Parish R.W."/>
        </authorList>
    </citation>
    <scope>NUCLEOTIDE SEQUENCE [MRNA] OF 168-258</scope>
    <source>
        <strain>BVK</strain>
    </source>
</reference>
<reference key="3">
    <citation type="journal article" date="1995" name="Trends Biochem. Sci.">
        <title>Conserved sequence motifs in bacterial and bacteriophage chaperonins.</title>
        <authorList>
            <person name="Rudd K.E."/>
            <person name="Sofia H.J."/>
            <person name="Koonin E.V."/>
            <person name="Plunkett G. III"/>
            <person name="Lazar S."/>
            <person name="Rouviere P.E."/>
        </authorList>
    </citation>
    <scope>IDENTIFICATION</scope>
</reference>
<organism>
    <name type="scientific">Bordetella pertussis (strain Tohama I / ATCC BAA-589 / NCTC 13251)</name>
    <dbReference type="NCBI Taxonomy" id="257313"/>
    <lineage>
        <taxon>Bacteria</taxon>
        <taxon>Pseudomonadati</taxon>
        <taxon>Pseudomonadota</taxon>
        <taxon>Betaproteobacteria</taxon>
        <taxon>Burkholderiales</taxon>
        <taxon>Alcaligenaceae</taxon>
        <taxon>Bordetella</taxon>
    </lineage>
</organism>
<protein>
    <recommendedName>
        <fullName>Probable parvulin-type peptidyl-prolyl cis-trans isomerase</fullName>
        <shortName>PPIase</shortName>
        <ecNumber>5.2.1.8</ecNumber>
    </recommendedName>
    <alternativeName>
        <fullName>Protein p13</fullName>
    </alternativeName>
    <alternativeName>
        <fullName>Rotamase</fullName>
    </alternativeName>
</protein>
<sequence length="258" mass="28964">MKRIAMLAAACVIAVPAFAQNVATVNGKPITQKSLDEFVKLVVSQGATDSPQLREQIKQEMINRQVFVQAAEKDGVAKQADVQTEIELARQGILVRALMADYLQKHPVTDAQVKAEYEKIKKEQAGKMEYKVRHILVEDEKTANDLLAQVKSNKNKFDDLAKKNSKDPGSAERGGDLGWAPATNYVQPFAEAVTKLKKGQLVDKPVQTQFGWHVIQVDDTRPVEFPAMDQVRPQLEEMLRQQTLANYQKQLREQAKIQ</sequence>